<comment type="function">
    <text evidence="4">Cytochrome P450 monooxygenase; part of the gene cluster that mediates the biosynthesis of andrastins, meroterpenoid compounds that exhibit inhibitory activity against ras farnesyltransferase, suggesting that they could be promising leads for antitumor agents (Ref.2). The first step of the pathway is the synthesis of 3,5-dimethylorsellinic acid (DMOA) by the polyketide synthase adrD via condensation of one acetyl-CoA starter unit with 3 malonyl-CoA units and 2 methylations (Ref.2). DMAO is then converted to farnesyl-DMAO by the prenyltransferase adrG (Ref.2). The methyltransferase adrK catalyzes the methylation of the carboxyl group of farnesyl-DMAO to farnesyl-DMAO methyl ester which is further converted to epoxyfarnesyl-DMAO methyl ester by the FAD-dependent monooxygenase adrH (Ref.2). The terpene cyclase adrI then catalyzes the carbon skeletal rearrangement to generate the andrastin E, the first compound in the pathway having the andrastin scaffold, with the tetracyclic ring system (Ref.2). The post-cyclization tailoring enzymes adrF, adrE, adrJ, and adrA, are involved in the conversion of andrastin E into andrastin A. The short chain dehydrogenase adrF is responsible for the oxidation of the C-3 a hydroxyl group of andrastin E to yield the corresponding ketone, andrastin D. The ketoreductase adrE stereoselectively reduces the carbonyl moiety to reverse the stereochemistry of the C-3 position to yield andrastin F. The acetyltransferase adrJ is the acetyltransferase that attaches the acetyl group to the C-3 hydroxyl group of andrastin F to yield andrastin C. Finally, the cytochrome P450 monooxygenase adrA catalyzes two sequential oxidation reactions of the C-23 methyl group, to generate the corresponding alcohol andrastin B, and aldehyde andrastin A (Ref.2).</text>
</comment>
<comment type="cofactor">
    <cofactor evidence="1">
        <name>heme</name>
        <dbReference type="ChEBI" id="CHEBI:30413"/>
    </cofactor>
</comment>
<comment type="pathway">
    <text evidence="4">Secondary metabolite biosynthesis; terpenoid biosynthesis.</text>
</comment>
<comment type="subcellular location">
    <subcellularLocation>
        <location evidence="2">Membrane</location>
        <topology evidence="2">Single-pass membrane protein</topology>
    </subcellularLocation>
</comment>
<comment type="similarity">
    <text evidence="6">Belongs to the cytochrome P450 family.</text>
</comment>
<accession>B6HUQ4</accession>
<dbReference type="EC" id="1.-.-.-" evidence="4"/>
<dbReference type="EMBL" id="AM920437">
    <property type="protein sequence ID" value="CAP99570.1"/>
    <property type="molecule type" value="Genomic_DNA"/>
</dbReference>
<dbReference type="RefSeq" id="XP_002566176.1">
    <property type="nucleotide sequence ID" value="XM_002566130.1"/>
</dbReference>
<dbReference type="SMR" id="B6HUQ4"/>
<dbReference type="STRING" id="500485.B6HUQ4"/>
<dbReference type="GlyCosmos" id="B6HUQ4">
    <property type="glycosylation" value="3 sites, No reported glycans"/>
</dbReference>
<dbReference type="VEuPathDB" id="FungiDB:PCH_Pc22g22820"/>
<dbReference type="eggNOG" id="KOG0158">
    <property type="taxonomic scope" value="Eukaryota"/>
</dbReference>
<dbReference type="HOGENOM" id="CLU_022195_0_3_1"/>
<dbReference type="OMA" id="EHMGFGF"/>
<dbReference type="OrthoDB" id="1844152at2759"/>
<dbReference type="BioCyc" id="PCHR:PC22G22820-MONOMER"/>
<dbReference type="UniPathway" id="UPA00213"/>
<dbReference type="Proteomes" id="UP000000724">
    <property type="component" value="Contig Pc00c22"/>
</dbReference>
<dbReference type="GO" id="GO:0016020">
    <property type="term" value="C:membrane"/>
    <property type="evidence" value="ECO:0007669"/>
    <property type="project" value="UniProtKB-SubCell"/>
</dbReference>
<dbReference type="GO" id="GO:0020037">
    <property type="term" value="F:heme binding"/>
    <property type="evidence" value="ECO:0007669"/>
    <property type="project" value="InterPro"/>
</dbReference>
<dbReference type="GO" id="GO:0005506">
    <property type="term" value="F:iron ion binding"/>
    <property type="evidence" value="ECO:0007669"/>
    <property type="project" value="InterPro"/>
</dbReference>
<dbReference type="GO" id="GO:0004497">
    <property type="term" value="F:monooxygenase activity"/>
    <property type="evidence" value="ECO:0007669"/>
    <property type="project" value="UniProtKB-KW"/>
</dbReference>
<dbReference type="GO" id="GO:0016705">
    <property type="term" value="F:oxidoreductase activity, acting on paired donors, with incorporation or reduction of molecular oxygen"/>
    <property type="evidence" value="ECO:0007669"/>
    <property type="project" value="InterPro"/>
</dbReference>
<dbReference type="GO" id="GO:0043386">
    <property type="term" value="P:mycotoxin biosynthetic process"/>
    <property type="evidence" value="ECO:0007669"/>
    <property type="project" value="UniProtKB-ARBA"/>
</dbReference>
<dbReference type="GO" id="GO:0016114">
    <property type="term" value="P:terpenoid biosynthetic process"/>
    <property type="evidence" value="ECO:0007669"/>
    <property type="project" value="UniProtKB-UniPathway"/>
</dbReference>
<dbReference type="CDD" id="cd11041">
    <property type="entry name" value="CYP503A1-like"/>
    <property type="match status" value="1"/>
</dbReference>
<dbReference type="Gene3D" id="1.10.630.10">
    <property type="entry name" value="Cytochrome P450"/>
    <property type="match status" value="1"/>
</dbReference>
<dbReference type="InterPro" id="IPR001128">
    <property type="entry name" value="Cyt_P450"/>
</dbReference>
<dbReference type="InterPro" id="IPR017972">
    <property type="entry name" value="Cyt_P450_CS"/>
</dbReference>
<dbReference type="InterPro" id="IPR002403">
    <property type="entry name" value="Cyt_P450_E_grp-IV"/>
</dbReference>
<dbReference type="InterPro" id="IPR036396">
    <property type="entry name" value="Cyt_P450_sf"/>
</dbReference>
<dbReference type="PANTHER" id="PTHR46206">
    <property type="entry name" value="CYTOCHROME P450"/>
    <property type="match status" value="1"/>
</dbReference>
<dbReference type="PANTHER" id="PTHR46206:SF2">
    <property type="entry name" value="CYTOCHROME P450 MONOOXYGENASE AUSG-RELATED"/>
    <property type="match status" value="1"/>
</dbReference>
<dbReference type="Pfam" id="PF00067">
    <property type="entry name" value="p450"/>
    <property type="match status" value="1"/>
</dbReference>
<dbReference type="PRINTS" id="PR00465">
    <property type="entry name" value="EP450IV"/>
</dbReference>
<dbReference type="SUPFAM" id="SSF48264">
    <property type="entry name" value="Cytochrome P450"/>
    <property type="match status" value="1"/>
</dbReference>
<dbReference type="PROSITE" id="PS00086">
    <property type="entry name" value="CYTOCHROME_P450"/>
    <property type="match status" value="1"/>
</dbReference>
<sequence length="512" mass="57501">MAVDKLPLLAKFEPVSLVGLVLLSGLFLLLTASRKSDLPLVNGKRPFEFGIAKARQRYLKNAHNLITAGLAKVCNSAGAFRIVTENGTRTILSPNYADDIRSHRDLSLSAALVKEHHVNIAGFDAVKVTVTSDIIQDTVRTKLTQNLLNITEPMSEEATILLKEQWTDNTDWHDVALRPKTLGIVAQLSSRVFLGDKVCRNPDWLRITVNYTIDSLMAAAELRLWPEMLRPLAARFLPKCKKIRKQLEEARDIIQPVIDERRLAQQEAIKQGKPQERYHDAIQWLAENTKDRSFEPAAMQLALSTAAIHTTTDLLGQTVLDLCGRDELIQELREEIISVFKDGSWDKSTMYKLKLMDSVIKESQRVKPMAIAKMARCAEEDVKLSDGTIIPKGEIILVSCSKMWDANVYPDPNTFDPHRFLKMRQPGSDQESFAQLVSPSPEHMGFGFGKHACPGRFFAAAELKVALCHIIMKYDFKVADGCNPQVLKSGMRLAADPFAKIAIRRRQEEVTF</sequence>
<protein>
    <recommendedName>
        <fullName evidence="5">Cytochrome P450 monooxygenase adrA</fullName>
        <ecNumber evidence="4">1.-.-.-</ecNumber>
    </recommendedName>
    <alternativeName>
        <fullName evidence="5">Andrastin A biosynthesis cluster protein A</fullName>
    </alternativeName>
</protein>
<organism>
    <name type="scientific">Penicillium rubens (strain ATCC 28089 / DSM 1075 / NRRL 1951 / Wisconsin 54-1255)</name>
    <name type="common">Penicillium chrysogenum</name>
    <dbReference type="NCBI Taxonomy" id="500485"/>
    <lineage>
        <taxon>Eukaryota</taxon>
        <taxon>Fungi</taxon>
        <taxon>Dikarya</taxon>
        <taxon>Ascomycota</taxon>
        <taxon>Pezizomycotina</taxon>
        <taxon>Eurotiomycetes</taxon>
        <taxon>Eurotiomycetidae</taxon>
        <taxon>Eurotiales</taxon>
        <taxon>Aspergillaceae</taxon>
        <taxon>Penicillium</taxon>
        <taxon>Penicillium chrysogenum species complex</taxon>
    </lineage>
</organism>
<feature type="chain" id="PRO_0000446455" description="Cytochrome P450 monooxygenase adrA">
    <location>
        <begin position="1"/>
        <end position="512"/>
    </location>
</feature>
<feature type="transmembrane region" description="Helical" evidence="2">
    <location>
        <begin position="12"/>
        <end position="32"/>
    </location>
</feature>
<feature type="binding site" description="axial binding residue" evidence="1">
    <location>
        <position position="453"/>
    </location>
    <ligand>
        <name>heme</name>
        <dbReference type="ChEBI" id="CHEBI:30413"/>
    </ligand>
    <ligandPart>
        <name>Fe</name>
        <dbReference type="ChEBI" id="CHEBI:18248"/>
    </ligandPart>
</feature>
<feature type="glycosylation site" description="N-linked (GlcNAc...) asparagine" evidence="3">
    <location>
        <position position="86"/>
    </location>
</feature>
<feature type="glycosylation site" description="N-linked (GlcNAc...) asparagine" evidence="3">
    <location>
        <position position="149"/>
    </location>
</feature>
<feature type="glycosylation site" description="N-linked (GlcNAc...) asparagine" evidence="3">
    <location>
        <position position="210"/>
    </location>
</feature>
<gene>
    <name evidence="5" type="primary">adrA</name>
    <name type="ORF">Pc22g22820</name>
</gene>
<keyword id="KW-0325">Glycoprotein</keyword>
<keyword id="KW-0349">Heme</keyword>
<keyword id="KW-0408">Iron</keyword>
<keyword id="KW-0472">Membrane</keyword>
<keyword id="KW-0479">Metal-binding</keyword>
<keyword id="KW-0503">Monooxygenase</keyword>
<keyword id="KW-0560">Oxidoreductase</keyword>
<keyword id="KW-1185">Reference proteome</keyword>
<keyword id="KW-0812">Transmembrane</keyword>
<keyword id="KW-1133">Transmembrane helix</keyword>
<reference key="1">
    <citation type="journal article" date="2008" name="Nat. Biotechnol.">
        <title>Genome sequencing and analysis of the filamentous fungus Penicillium chrysogenum.</title>
        <authorList>
            <person name="van den Berg M.A."/>
            <person name="Albang R."/>
            <person name="Albermann K."/>
            <person name="Badger J.H."/>
            <person name="Daran J.-M."/>
            <person name="Driessen A.J.M."/>
            <person name="Garcia-Estrada C."/>
            <person name="Fedorova N.D."/>
            <person name="Harris D.M."/>
            <person name="Heijne W.H.M."/>
            <person name="Joardar V.S."/>
            <person name="Kiel J.A.K.W."/>
            <person name="Kovalchuk A."/>
            <person name="Martin J.F."/>
            <person name="Nierman W.C."/>
            <person name="Nijland J.G."/>
            <person name="Pronk J.T."/>
            <person name="Roubos J.A."/>
            <person name="van der Klei I.J."/>
            <person name="van Peij N.N.M.E."/>
            <person name="Veenhuis M."/>
            <person name="von Doehren H."/>
            <person name="Wagner C."/>
            <person name="Wortman J.R."/>
            <person name="Bovenberg R.A.L."/>
        </authorList>
    </citation>
    <scope>NUCLEOTIDE SEQUENCE [LARGE SCALE GENOMIC DNA]</scope>
    <source>
        <strain>ATCC 28089 / DSM 1075 / NRRL 1951 / Wisconsin 54-1255</strain>
    </source>
</reference>
<reference key="2">
    <citation type="journal article" date="2013" name="Tetrahedron">
        <title>Reconstituted biosynthesis of fungal meroterpenoid andrastin A.</title>
        <authorList>
            <person name="Matsuda Y."/>
            <person name="Awakawa T."/>
            <person name="Abe I."/>
        </authorList>
    </citation>
    <scope>IDENTIFICATION</scope>
    <scope>FUNCTION</scope>
    <scope>CATALYTIC ACTIVITY</scope>
    <scope>PATHWAY</scope>
</reference>
<name>ADRA_PENRW</name>
<proteinExistence type="evidence at protein level"/>
<evidence type="ECO:0000250" key="1">
    <source>
        <dbReference type="UniProtKB" id="P04798"/>
    </source>
</evidence>
<evidence type="ECO:0000255" key="2"/>
<evidence type="ECO:0000255" key="3">
    <source>
        <dbReference type="PROSITE-ProRule" id="PRU00498"/>
    </source>
</evidence>
<evidence type="ECO:0000269" key="4">
    <source ref="2"/>
</evidence>
<evidence type="ECO:0000303" key="5">
    <source ref="2"/>
</evidence>
<evidence type="ECO:0000305" key="6"/>